<reference key="1">
    <citation type="submission" date="2007-03" db="EMBL/GenBank/DDBJ databases">
        <title>Sequencing analysis of Nasturtium officinale chloroplast DNA.</title>
        <authorList>
            <person name="Hosouchi T."/>
            <person name="Tsuruoka H."/>
            <person name="Kotani H."/>
        </authorList>
    </citation>
    <scope>NUCLEOTIDE SEQUENCE [LARGE SCALE GENOMIC DNA]</scope>
</reference>
<protein>
    <recommendedName>
        <fullName evidence="1">ATP synthase subunit a, chloroplastic</fullName>
    </recommendedName>
    <alternativeName>
        <fullName evidence="1">ATP synthase F0 sector subunit a</fullName>
    </alternativeName>
    <alternativeName>
        <fullName evidence="1">F-ATPase subunit IV</fullName>
    </alternativeName>
</protein>
<geneLocation type="chloroplast"/>
<sequence>MNVLSCSINTLIKEGLYEISGVEVGQHFYWQIGGFQVHAQVLITSWVVIAILLGSAVLAIRNPQTIPTDGQNFFEFVLEFIRDVSKTQIGEEYGPWVPFIGTLFLFIFVSNWSGALLPWKIIQLPQGELAAPTNDINTTVALALLTSVAYFYAGLSKKGLGYFSKYIQPTPILLPINILEDFTKPLSLSFRLFGNILADELVVVVLVSLVPLVVPIPVMFLGLFTSGIQALIFATLAAAYIGESMEGHH</sequence>
<dbReference type="EMBL" id="AP009376">
    <property type="protein sequence ID" value="BAF50626.1"/>
    <property type="molecule type" value="Genomic_DNA"/>
</dbReference>
<dbReference type="RefSeq" id="YP_001123802.1">
    <property type="nucleotide sequence ID" value="NC_009275.1"/>
</dbReference>
<dbReference type="SMR" id="A4QLS1"/>
<dbReference type="GeneID" id="4962103"/>
<dbReference type="GO" id="GO:0009535">
    <property type="term" value="C:chloroplast thylakoid membrane"/>
    <property type="evidence" value="ECO:0007669"/>
    <property type="project" value="UniProtKB-SubCell"/>
</dbReference>
<dbReference type="GO" id="GO:0005886">
    <property type="term" value="C:plasma membrane"/>
    <property type="evidence" value="ECO:0007669"/>
    <property type="project" value="UniProtKB-UniRule"/>
</dbReference>
<dbReference type="GO" id="GO:0045259">
    <property type="term" value="C:proton-transporting ATP synthase complex"/>
    <property type="evidence" value="ECO:0007669"/>
    <property type="project" value="UniProtKB-KW"/>
</dbReference>
<dbReference type="GO" id="GO:0046933">
    <property type="term" value="F:proton-transporting ATP synthase activity, rotational mechanism"/>
    <property type="evidence" value="ECO:0007669"/>
    <property type="project" value="UniProtKB-UniRule"/>
</dbReference>
<dbReference type="CDD" id="cd00310">
    <property type="entry name" value="ATP-synt_Fo_a_6"/>
    <property type="match status" value="1"/>
</dbReference>
<dbReference type="FunFam" id="1.20.120.220:FF:000001">
    <property type="entry name" value="ATP synthase subunit a, chloroplastic"/>
    <property type="match status" value="1"/>
</dbReference>
<dbReference type="Gene3D" id="1.20.120.220">
    <property type="entry name" value="ATP synthase, F0 complex, subunit A"/>
    <property type="match status" value="1"/>
</dbReference>
<dbReference type="HAMAP" id="MF_01393">
    <property type="entry name" value="ATP_synth_a_bact"/>
    <property type="match status" value="1"/>
</dbReference>
<dbReference type="InterPro" id="IPR045082">
    <property type="entry name" value="ATP_syn_F0_a_bact/chloroplast"/>
</dbReference>
<dbReference type="InterPro" id="IPR000568">
    <property type="entry name" value="ATP_synth_F0_asu"/>
</dbReference>
<dbReference type="InterPro" id="IPR023011">
    <property type="entry name" value="ATP_synth_F0_asu_AS"/>
</dbReference>
<dbReference type="InterPro" id="IPR035908">
    <property type="entry name" value="F0_ATP_A_sf"/>
</dbReference>
<dbReference type="NCBIfam" id="TIGR01131">
    <property type="entry name" value="ATP_synt_6_or_A"/>
    <property type="match status" value="1"/>
</dbReference>
<dbReference type="PANTHER" id="PTHR42823">
    <property type="entry name" value="ATP SYNTHASE SUBUNIT A, CHLOROPLASTIC"/>
    <property type="match status" value="1"/>
</dbReference>
<dbReference type="PANTHER" id="PTHR42823:SF3">
    <property type="entry name" value="ATP SYNTHASE SUBUNIT A, CHLOROPLASTIC"/>
    <property type="match status" value="1"/>
</dbReference>
<dbReference type="Pfam" id="PF00119">
    <property type="entry name" value="ATP-synt_A"/>
    <property type="match status" value="1"/>
</dbReference>
<dbReference type="PRINTS" id="PR00123">
    <property type="entry name" value="ATPASEA"/>
</dbReference>
<dbReference type="SUPFAM" id="SSF81336">
    <property type="entry name" value="F1F0 ATP synthase subunit A"/>
    <property type="match status" value="1"/>
</dbReference>
<dbReference type="PROSITE" id="PS00449">
    <property type="entry name" value="ATPASE_A"/>
    <property type="match status" value="1"/>
</dbReference>
<proteinExistence type="inferred from homology"/>
<accession>A4QLS1</accession>
<name>ATPI_NASOF</name>
<feature type="chain" id="PRO_0000362574" description="ATP synthase subunit a, chloroplastic">
    <location>
        <begin position="1"/>
        <end position="249"/>
    </location>
</feature>
<feature type="transmembrane region" description="Helical" evidence="1">
    <location>
        <begin position="40"/>
        <end position="60"/>
    </location>
</feature>
<feature type="transmembrane region" description="Helical" evidence="1">
    <location>
        <begin position="97"/>
        <end position="117"/>
    </location>
</feature>
<feature type="transmembrane region" description="Helical" evidence="1">
    <location>
        <begin position="136"/>
        <end position="156"/>
    </location>
</feature>
<feature type="transmembrane region" description="Helical" evidence="1">
    <location>
        <begin position="201"/>
        <end position="221"/>
    </location>
</feature>
<feature type="transmembrane region" description="Helical" evidence="1">
    <location>
        <begin position="222"/>
        <end position="242"/>
    </location>
</feature>
<evidence type="ECO:0000255" key="1">
    <source>
        <dbReference type="HAMAP-Rule" id="MF_01393"/>
    </source>
</evidence>
<organism>
    <name type="scientific">Nasturtium officinale</name>
    <name type="common">Watercress</name>
    <name type="synonym">Rorippa nasturtium-aquaticum</name>
    <dbReference type="NCBI Taxonomy" id="65948"/>
    <lineage>
        <taxon>Eukaryota</taxon>
        <taxon>Viridiplantae</taxon>
        <taxon>Streptophyta</taxon>
        <taxon>Embryophyta</taxon>
        <taxon>Tracheophyta</taxon>
        <taxon>Spermatophyta</taxon>
        <taxon>Magnoliopsida</taxon>
        <taxon>eudicotyledons</taxon>
        <taxon>Gunneridae</taxon>
        <taxon>Pentapetalae</taxon>
        <taxon>rosids</taxon>
        <taxon>malvids</taxon>
        <taxon>Brassicales</taxon>
        <taxon>Brassicaceae</taxon>
        <taxon>Cardamineae</taxon>
        <taxon>Nasturtium</taxon>
    </lineage>
</organism>
<keyword id="KW-0066">ATP synthesis</keyword>
<keyword id="KW-0138">CF(0)</keyword>
<keyword id="KW-0150">Chloroplast</keyword>
<keyword id="KW-0375">Hydrogen ion transport</keyword>
<keyword id="KW-0406">Ion transport</keyword>
<keyword id="KW-0472">Membrane</keyword>
<keyword id="KW-0934">Plastid</keyword>
<keyword id="KW-0793">Thylakoid</keyword>
<keyword id="KW-0812">Transmembrane</keyword>
<keyword id="KW-1133">Transmembrane helix</keyword>
<keyword id="KW-0813">Transport</keyword>
<comment type="function">
    <text evidence="1">Key component of the proton channel; it plays a direct role in the translocation of protons across the membrane.</text>
</comment>
<comment type="subunit">
    <text evidence="1">F-type ATPases have 2 components, CF(1) - the catalytic core - and CF(0) - the membrane proton channel. CF(1) has five subunits: alpha(3), beta(3), gamma(1), delta(1), epsilon(1). CF(0) has four main subunits: a, b, b' and c.</text>
</comment>
<comment type="subcellular location">
    <subcellularLocation>
        <location evidence="1">Plastid</location>
        <location evidence="1">Chloroplast thylakoid membrane</location>
        <topology evidence="1">Multi-pass membrane protein</topology>
    </subcellularLocation>
</comment>
<comment type="similarity">
    <text evidence="1">Belongs to the ATPase A chain family.</text>
</comment>
<gene>
    <name evidence="1" type="primary">atpI</name>
</gene>